<protein>
    <recommendedName>
        <fullName evidence="1">Holo-[acyl-carrier-protein] synthase</fullName>
        <shortName evidence="1">Holo-ACP synthase</shortName>
        <ecNumber evidence="1">2.7.8.7</ecNumber>
    </recommendedName>
    <alternativeName>
        <fullName evidence="1">4'-phosphopantetheinyl transferase AcpS</fullName>
    </alternativeName>
</protein>
<name>ACPS_AZOSB</name>
<organism>
    <name type="scientific">Azoarcus sp. (strain BH72)</name>
    <dbReference type="NCBI Taxonomy" id="418699"/>
    <lineage>
        <taxon>Bacteria</taxon>
        <taxon>Pseudomonadati</taxon>
        <taxon>Pseudomonadota</taxon>
        <taxon>Betaproteobacteria</taxon>
        <taxon>Rhodocyclales</taxon>
        <taxon>Zoogloeaceae</taxon>
        <taxon>Azoarcus</taxon>
    </lineage>
</organism>
<keyword id="KW-0963">Cytoplasm</keyword>
<keyword id="KW-0275">Fatty acid biosynthesis</keyword>
<keyword id="KW-0276">Fatty acid metabolism</keyword>
<keyword id="KW-0444">Lipid biosynthesis</keyword>
<keyword id="KW-0443">Lipid metabolism</keyword>
<keyword id="KW-0460">Magnesium</keyword>
<keyword id="KW-0479">Metal-binding</keyword>
<keyword id="KW-1185">Reference proteome</keyword>
<keyword id="KW-0808">Transferase</keyword>
<gene>
    <name evidence="1" type="primary">acpS</name>
    <name type="ordered locus">azo1646</name>
</gene>
<accession>A1K608</accession>
<reference key="1">
    <citation type="journal article" date="2006" name="Nat. Biotechnol.">
        <title>Complete genome of the mutualistic, N2-fixing grass endophyte Azoarcus sp. strain BH72.</title>
        <authorList>
            <person name="Krause A."/>
            <person name="Ramakumar A."/>
            <person name="Bartels D."/>
            <person name="Battistoni F."/>
            <person name="Bekel T."/>
            <person name="Boch J."/>
            <person name="Boehm M."/>
            <person name="Friedrich F."/>
            <person name="Hurek T."/>
            <person name="Krause L."/>
            <person name="Linke B."/>
            <person name="McHardy A.C."/>
            <person name="Sarkar A."/>
            <person name="Schneiker S."/>
            <person name="Syed A.A."/>
            <person name="Thauer R."/>
            <person name="Vorhoelter F.-J."/>
            <person name="Weidner S."/>
            <person name="Puehler A."/>
            <person name="Reinhold-Hurek B."/>
            <person name="Kaiser O."/>
            <person name="Goesmann A."/>
        </authorList>
    </citation>
    <scope>NUCLEOTIDE SEQUENCE [LARGE SCALE GENOMIC DNA]</scope>
    <source>
        <strain>BH72</strain>
    </source>
</reference>
<dbReference type="EC" id="2.7.8.7" evidence="1"/>
<dbReference type="EMBL" id="AM406670">
    <property type="protein sequence ID" value="CAL94263.1"/>
    <property type="molecule type" value="Genomic_DNA"/>
</dbReference>
<dbReference type="RefSeq" id="WP_011765379.1">
    <property type="nucleotide sequence ID" value="NC_008702.1"/>
</dbReference>
<dbReference type="SMR" id="A1K608"/>
<dbReference type="STRING" id="62928.azo1646"/>
<dbReference type="KEGG" id="azo:azo1646"/>
<dbReference type="eggNOG" id="COG0736">
    <property type="taxonomic scope" value="Bacteria"/>
</dbReference>
<dbReference type="HOGENOM" id="CLU_089696_3_1_4"/>
<dbReference type="Proteomes" id="UP000002588">
    <property type="component" value="Chromosome"/>
</dbReference>
<dbReference type="GO" id="GO:0005737">
    <property type="term" value="C:cytoplasm"/>
    <property type="evidence" value="ECO:0007669"/>
    <property type="project" value="UniProtKB-SubCell"/>
</dbReference>
<dbReference type="GO" id="GO:0008897">
    <property type="term" value="F:holo-[acyl-carrier-protein] synthase activity"/>
    <property type="evidence" value="ECO:0007669"/>
    <property type="project" value="UniProtKB-UniRule"/>
</dbReference>
<dbReference type="GO" id="GO:0000287">
    <property type="term" value="F:magnesium ion binding"/>
    <property type="evidence" value="ECO:0007669"/>
    <property type="project" value="UniProtKB-UniRule"/>
</dbReference>
<dbReference type="GO" id="GO:0006633">
    <property type="term" value="P:fatty acid biosynthetic process"/>
    <property type="evidence" value="ECO:0007669"/>
    <property type="project" value="UniProtKB-UniRule"/>
</dbReference>
<dbReference type="Gene3D" id="3.90.470.20">
    <property type="entry name" value="4'-phosphopantetheinyl transferase domain"/>
    <property type="match status" value="1"/>
</dbReference>
<dbReference type="HAMAP" id="MF_00101">
    <property type="entry name" value="AcpS"/>
    <property type="match status" value="1"/>
</dbReference>
<dbReference type="InterPro" id="IPR008278">
    <property type="entry name" value="4-PPantetheinyl_Trfase_dom"/>
</dbReference>
<dbReference type="InterPro" id="IPR037143">
    <property type="entry name" value="4-PPantetheinyl_Trfase_dom_sf"/>
</dbReference>
<dbReference type="InterPro" id="IPR002582">
    <property type="entry name" value="ACPS"/>
</dbReference>
<dbReference type="InterPro" id="IPR004568">
    <property type="entry name" value="Ppantetheine-prot_Trfase_dom"/>
</dbReference>
<dbReference type="NCBIfam" id="TIGR00516">
    <property type="entry name" value="acpS"/>
    <property type="match status" value="1"/>
</dbReference>
<dbReference type="NCBIfam" id="TIGR00556">
    <property type="entry name" value="pantethn_trn"/>
    <property type="match status" value="1"/>
</dbReference>
<dbReference type="Pfam" id="PF01648">
    <property type="entry name" value="ACPS"/>
    <property type="match status" value="1"/>
</dbReference>
<dbReference type="SUPFAM" id="SSF56214">
    <property type="entry name" value="4'-phosphopantetheinyl transferase"/>
    <property type="match status" value="1"/>
</dbReference>
<comment type="function">
    <text evidence="1">Transfers the 4'-phosphopantetheine moiety from coenzyme A to a Ser of acyl-carrier-protein.</text>
</comment>
<comment type="catalytic activity">
    <reaction evidence="1">
        <text>apo-[ACP] + CoA = holo-[ACP] + adenosine 3',5'-bisphosphate + H(+)</text>
        <dbReference type="Rhea" id="RHEA:12068"/>
        <dbReference type="Rhea" id="RHEA-COMP:9685"/>
        <dbReference type="Rhea" id="RHEA-COMP:9690"/>
        <dbReference type="ChEBI" id="CHEBI:15378"/>
        <dbReference type="ChEBI" id="CHEBI:29999"/>
        <dbReference type="ChEBI" id="CHEBI:57287"/>
        <dbReference type="ChEBI" id="CHEBI:58343"/>
        <dbReference type="ChEBI" id="CHEBI:64479"/>
        <dbReference type="EC" id="2.7.8.7"/>
    </reaction>
</comment>
<comment type="cofactor">
    <cofactor evidence="1">
        <name>Mg(2+)</name>
        <dbReference type="ChEBI" id="CHEBI:18420"/>
    </cofactor>
</comment>
<comment type="subcellular location">
    <subcellularLocation>
        <location evidence="1">Cytoplasm</location>
    </subcellularLocation>
</comment>
<comment type="similarity">
    <text evidence="1">Belongs to the P-Pant transferase superfamily. AcpS family.</text>
</comment>
<evidence type="ECO:0000255" key="1">
    <source>
        <dbReference type="HAMAP-Rule" id="MF_00101"/>
    </source>
</evidence>
<sequence length="125" mass="13955">MIHGIGTDIVHIARIRTSLERHGERFAERILAESEREAWRASRDPARFLAKRFAAKEAFGKALGTGVAVPATLHAVAVDHDALGKPLYRYGDGLQTYLDDRRLNAHLSLTDENDYVVAFAVIETR</sequence>
<feature type="chain" id="PRO_1000008384" description="Holo-[acyl-carrier-protein] synthase">
    <location>
        <begin position="1"/>
        <end position="125"/>
    </location>
</feature>
<feature type="binding site" evidence="1">
    <location>
        <position position="8"/>
    </location>
    <ligand>
        <name>Mg(2+)</name>
        <dbReference type="ChEBI" id="CHEBI:18420"/>
    </ligand>
</feature>
<feature type="binding site" evidence="1">
    <location>
        <position position="57"/>
    </location>
    <ligand>
        <name>Mg(2+)</name>
        <dbReference type="ChEBI" id="CHEBI:18420"/>
    </ligand>
</feature>
<proteinExistence type="inferred from homology"/>